<evidence type="ECO:0000255" key="1">
    <source>
        <dbReference type="HAMAP-Rule" id="MF_02002"/>
    </source>
</evidence>
<reference key="1">
    <citation type="submission" date="2007-11" db="EMBL/GenBank/DDBJ databases">
        <title>The genome sequence of the hyperthermophilic bacterium Thermotoga neapolitana.</title>
        <authorList>
            <person name="Lim S.K."/>
            <person name="Kim J.S."/>
            <person name="Cha S.H."/>
            <person name="Park B.C."/>
            <person name="Lee D.S."/>
            <person name="Tae H.S."/>
            <person name="Kim S.-J."/>
            <person name="Kim J.J."/>
            <person name="Park K.J."/>
            <person name="Lee S.Y."/>
        </authorList>
    </citation>
    <scope>NUCLEOTIDE SEQUENCE [LARGE SCALE GENOMIC DNA]</scope>
    <source>
        <strain>ATCC 49049 / DSM 4359 / NBRC 107923 / NS-E</strain>
    </source>
</reference>
<proteinExistence type="inferred from homology"/>
<comment type="function">
    <text evidence="1">Catalyzes the attachment of isoleucine to tRNA(Ile). As IleRS can inadvertently accommodate and process structurally similar amino acids such as valine, to avoid such errors it has two additional distinct tRNA(Ile)-dependent editing activities. One activity is designated as 'pretransfer' editing and involves the hydrolysis of activated Val-AMP. The other activity is designated 'posttransfer' editing and involves deacylation of mischarged Val-tRNA(Ile).</text>
</comment>
<comment type="catalytic activity">
    <reaction evidence="1">
        <text>tRNA(Ile) + L-isoleucine + ATP = L-isoleucyl-tRNA(Ile) + AMP + diphosphate</text>
        <dbReference type="Rhea" id="RHEA:11060"/>
        <dbReference type="Rhea" id="RHEA-COMP:9666"/>
        <dbReference type="Rhea" id="RHEA-COMP:9695"/>
        <dbReference type="ChEBI" id="CHEBI:30616"/>
        <dbReference type="ChEBI" id="CHEBI:33019"/>
        <dbReference type="ChEBI" id="CHEBI:58045"/>
        <dbReference type="ChEBI" id="CHEBI:78442"/>
        <dbReference type="ChEBI" id="CHEBI:78528"/>
        <dbReference type="ChEBI" id="CHEBI:456215"/>
        <dbReference type="EC" id="6.1.1.5"/>
    </reaction>
</comment>
<comment type="cofactor">
    <cofactor evidence="1">
        <name>Zn(2+)</name>
        <dbReference type="ChEBI" id="CHEBI:29105"/>
    </cofactor>
    <text evidence="1">Binds 1 zinc ion per subunit.</text>
</comment>
<comment type="subunit">
    <text evidence="1">Monomer.</text>
</comment>
<comment type="subcellular location">
    <subcellularLocation>
        <location evidence="1">Cytoplasm</location>
    </subcellularLocation>
</comment>
<comment type="domain">
    <text evidence="1">IleRS has two distinct active sites: one for aminoacylation and one for editing. The misactivated valine is translocated from the active site to the editing site, which sterically excludes the correctly activated isoleucine. The single editing site contains two valyl binding pockets, one specific for each substrate (Val-AMP or Val-tRNA(Ile)).</text>
</comment>
<comment type="similarity">
    <text evidence="1">Belongs to the class-I aminoacyl-tRNA synthetase family. IleS type 1 subfamily.</text>
</comment>
<sequence>MDYKNTLNLPKTSFPMRANLVNKEKAFLKEWEEMDLYNYVLEQRKGKPLFVLHDGPPYANGHIHIGTALNKILKDIVVKYKTMRGYRAPYVPGWDTHGLPIEHRVSQELGDRIKEMSPAEIRKKCEEFALKFVEIQKEEFKRLGVRGDWNNPYITLKPDYEVKILDVFKTLVEQGNVYRSLKPIYWCPRCRTALAEAEIEYHDHRSPSIYVKFRSKDDPNLYIVIWTTTPWTLPANVGIALHPDFEYSVVKVGDERWVIATDLLETFSRETGVDCSEVVEKIRGKDLEGKEFQHPIFEDKTSRVILADYVSLETGTGCVHIAPGHGEEDYVYGHVKYGLPIVSPVDEEGRFTDEAGKYRGMFIEDSNRVIIEDLKEKGILVHASTITHSYPHCWRCKGPVIFRATEQWFISVDHNNLRQRVLEEIDRVKWIPEWGRNRIRSMVEERPDWCISRQRVWGTPIPAVKCKECGEVTLDPKVIEHFMKIVEKEGTNAWFEKDVEELIPDDFRCPKCGARSFEKMLDTLDVWIDSGSSFEYITTREDHPFPLDMYLEGSDQHRGWFHSSIFLAVAKRGSAPYKEVLTHGFIKDELGRKMSKSLGNVVDPMEVVEKYGAEILRLWLASSDYFNDIKISMRIVEQQTEVYKKIRNTFRFLLGNLEDFDPELDRVPYEKLLTIDKWALGRLQEIIKRATEYYDSYEFSKVYNLVVKYCTTELSSLYLDVVKDRLYVEAKDSLYRRSAQTVMHEILIALMKILAPIMTFTMEEVYSHLHEKDRKYKTVQAEYWPEYREDLIDKKIMEDFEKLLSIREDVLKALEEKRQQDVIGHSLDAEVILVPRNDSVKALLEEYRDVLEELFIVSKVSLSDGSGELKGELVEVTAKHAEGEKCQRCWKYTTEISRSEEFPAVCPRCLAVLKGERK</sequence>
<protein>
    <recommendedName>
        <fullName evidence="1">Isoleucine--tRNA ligase</fullName>
        <ecNumber evidence="1">6.1.1.5</ecNumber>
    </recommendedName>
    <alternativeName>
        <fullName evidence="1">Isoleucyl-tRNA synthetase</fullName>
        <shortName evidence="1">IleRS</shortName>
    </alternativeName>
</protein>
<organism>
    <name type="scientific">Thermotoga neapolitana (strain ATCC 49049 / DSM 4359 / NBRC 107923 / NS-E)</name>
    <dbReference type="NCBI Taxonomy" id="309803"/>
    <lineage>
        <taxon>Bacteria</taxon>
        <taxon>Thermotogati</taxon>
        <taxon>Thermotogota</taxon>
        <taxon>Thermotogae</taxon>
        <taxon>Thermotogales</taxon>
        <taxon>Thermotogaceae</taxon>
        <taxon>Thermotoga</taxon>
    </lineage>
</organism>
<dbReference type="EC" id="6.1.1.5" evidence="1"/>
<dbReference type="EMBL" id="CP000916">
    <property type="protein sequence ID" value="ACM23406.1"/>
    <property type="molecule type" value="Genomic_DNA"/>
</dbReference>
<dbReference type="RefSeq" id="WP_015919721.1">
    <property type="nucleotide sequence ID" value="NC_011978.1"/>
</dbReference>
<dbReference type="SMR" id="B9K8X3"/>
<dbReference type="STRING" id="309803.CTN_1230"/>
<dbReference type="KEGG" id="tna:CTN_1230"/>
<dbReference type="eggNOG" id="COG0060">
    <property type="taxonomic scope" value="Bacteria"/>
</dbReference>
<dbReference type="HOGENOM" id="CLU_001493_7_0_0"/>
<dbReference type="Proteomes" id="UP000000445">
    <property type="component" value="Chromosome"/>
</dbReference>
<dbReference type="GO" id="GO:0005829">
    <property type="term" value="C:cytosol"/>
    <property type="evidence" value="ECO:0007669"/>
    <property type="project" value="TreeGrafter"/>
</dbReference>
<dbReference type="GO" id="GO:0002161">
    <property type="term" value="F:aminoacyl-tRNA deacylase activity"/>
    <property type="evidence" value="ECO:0007669"/>
    <property type="project" value="InterPro"/>
</dbReference>
<dbReference type="GO" id="GO:0005524">
    <property type="term" value="F:ATP binding"/>
    <property type="evidence" value="ECO:0007669"/>
    <property type="project" value="UniProtKB-UniRule"/>
</dbReference>
<dbReference type="GO" id="GO:0004822">
    <property type="term" value="F:isoleucine-tRNA ligase activity"/>
    <property type="evidence" value="ECO:0007669"/>
    <property type="project" value="UniProtKB-UniRule"/>
</dbReference>
<dbReference type="GO" id="GO:0000049">
    <property type="term" value="F:tRNA binding"/>
    <property type="evidence" value="ECO:0007669"/>
    <property type="project" value="InterPro"/>
</dbReference>
<dbReference type="GO" id="GO:0008270">
    <property type="term" value="F:zinc ion binding"/>
    <property type="evidence" value="ECO:0007669"/>
    <property type="project" value="UniProtKB-UniRule"/>
</dbReference>
<dbReference type="GO" id="GO:0006428">
    <property type="term" value="P:isoleucyl-tRNA aminoacylation"/>
    <property type="evidence" value="ECO:0007669"/>
    <property type="project" value="UniProtKB-UniRule"/>
</dbReference>
<dbReference type="CDD" id="cd07960">
    <property type="entry name" value="Anticodon_Ia_Ile_BEm"/>
    <property type="match status" value="1"/>
</dbReference>
<dbReference type="CDD" id="cd00818">
    <property type="entry name" value="IleRS_core"/>
    <property type="match status" value="1"/>
</dbReference>
<dbReference type="FunFam" id="1.10.10.830:FF:000008">
    <property type="entry name" value="Isoleucine--tRNA ligase"/>
    <property type="match status" value="1"/>
</dbReference>
<dbReference type="FunFam" id="1.10.730.20:FF:000001">
    <property type="entry name" value="Isoleucine--tRNA ligase"/>
    <property type="match status" value="1"/>
</dbReference>
<dbReference type="FunFam" id="3.40.50.620:FF:000152">
    <property type="entry name" value="Isoleucine--tRNA ligase"/>
    <property type="match status" value="1"/>
</dbReference>
<dbReference type="Gene3D" id="1.10.730.20">
    <property type="match status" value="1"/>
</dbReference>
<dbReference type="Gene3D" id="3.40.50.620">
    <property type="entry name" value="HUPs"/>
    <property type="match status" value="2"/>
</dbReference>
<dbReference type="Gene3D" id="1.10.10.830">
    <property type="entry name" value="Ile-tRNA synthetase CP2 domain-like"/>
    <property type="match status" value="1"/>
</dbReference>
<dbReference type="Gene3D" id="3.90.740.10">
    <property type="entry name" value="Valyl/Leucyl/Isoleucyl-tRNA synthetase, editing domain"/>
    <property type="match status" value="1"/>
</dbReference>
<dbReference type="HAMAP" id="MF_02002">
    <property type="entry name" value="Ile_tRNA_synth_type1"/>
    <property type="match status" value="1"/>
</dbReference>
<dbReference type="InterPro" id="IPR001412">
    <property type="entry name" value="aa-tRNA-synth_I_CS"/>
</dbReference>
<dbReference type="InterPro" id="IPR002300">
    <property type="entry name" value="aa-tRNA-synth_Ia"/>
</dbReference>
<dbReference type="InterPro" id="IPR033708">
    <property type="entry name" value="Anticodon_Ile_BEm"/>
</dbReference>
<dbReference type="InterPro" id="IPR002301">
    <property type="entry name" value="Ile-tRNA-ligase"/>
</dbReference>
<dbReference type="InterPro" id="IPR023585">
    <property type="entry name" value="Ile-tRNA-ligase_type1"/>
</dbReference>
<dbReference type="InterPro" id="IPR050081">
    <property type="entry name" value="Ile-tRNA_ligase"/>
</dbReference>
<dbReference type="InterPro" id="IPR013155">
    <property type="entry name" value="M/V/L/I-tRNA-synth_anticd-bd"/>
</dbReference>
<dbReference type="InterPro" id="IPR014729">
    <property type="entry name" value="Rossmann-like_a/b/a_fold"/>
</dbReference>
<dbReference type="InterPro" id="IPR009080">
    <property type="entry name" value="tRNAsynth_Ia_anticodon-bd"/>
</dbReference>
<dbReference type="InterPro" id="IPR009008">
    <property type="entry name" value="Val/Leu/Ile-tRNA-synth_edit"/>
</dbReference>
<dbReference type="InterPro" id="IPR010663">
    <property type="entry name" value="Znf_FPG/IleRS"/>
</dbReference>
<dbReference type="NCBIfam" id="TIGR00392">
    <property type="entry name" value="ileS"/>
    <property type="match status" value="1"/>
</dbReference>
<dbReference type="PANTHER" id="PTHR42765:SF1">
    <property type="entry name" value="ISOLEUCINE--TRNA LIGASE, MITOCHONDRIAL"/>
    <property type="match status" value="1"/>
</dbReference>
<dbReference type="PANTHER" id="PTHR42765">
    <property type="entry name" value="SOLEUCYL-TRNA SYNTHETASE"/>
    <property type="match status" value="1"/>
</dbReference>
<dbReference type="Pfam" id="PF08264">
    <property type="entry name" value="Anticodon_1"/>
    <property type="match status" value="1"/>
</dbReference>
<dbReference type="Pfam" id="PF00133">
    <property type="entry name" value="tRNA-synt_1"/>
    <property type="match status" value="1"/>
</dbReference>
<dbReference type="Pfam" id="PF06827">
    <property type="entry name" value="zf-FPG_IleRS"/>
    <property type="match status" value="1"/>
</dbReference>
<dbReference type="PRINTS" id="PR00984">
    <property type="entry name" value="TRNASYNTHILE"/>
</dbReference>
<dbReference type="SUPFAM" id="SSF47323">
    <property type="entry name" value="Anticodon-binding domain of a subclass of class I aminoacyl-tRNA synthetases"/>
    <property type="match status" value="1"/>
</dbReference>
<dbReference type="SUPFAM" id="SSF52374">
    <property type="entry name" value="Nucleotidylyl transferase"/>
    <property type="match status" value="1"/>
</dbReference>
<dbReference type="SUPFAM" id="SSF50677">
    <property type="entry name" value="ValRS/IleRS/LeuRS editing domain"/>
    <property type="match status" value="1"/>
</dbReference>
<dbReference type="PROSITE" id="PS00178">
    <property type="entry name" value="AA_TRNA_LIGASE_I"/>
    <property type="match status" value="1"/>
</dbReference>
<gene>
    <name evidence="1" type="primary">ileS</name>
    <name type="ordered locus">CTN_1230</name>
</gene>
<keyword id="KW-0030">Aminoacyl-tRNA synthetase</keyword>
<keyword id="KW-0067">ATP-binding</keyword>
<keyword id="KW-0963">Cytoplasm</keyword>
<keyword id="KW-0436">Ligase</keyword>
<keyword id="KW-0479">Metal-binding</keyword>
<keyword id="KW-0547">Nucleotide-binding</keyword>
<keyword id="KW-0648">Protein biosynthesis</keyword>
<keyword id="KW-0862">Zinc</keyword>
<accession>B9K8X3</accession>
<feature type="chain" id="PRO_1000189209" description="Isoleucine--tRNA ligase">
    <location>
        <begin position="1"/>
        <end position="918"/>
    </location>
</feature>
<feature type="short sequence motif" description="'HIGH' region">
    <location>
        <begin position="57"/>
        <end position="67"/>
    </location>
</feature>
<feature type="short sequence motif" description="'KMSKS' region">
    <location>
        <begin position="593"/>
        <end position="597"/>
    </location>
</feature>
<feature type="binding site" evidence="1">
    <location>
        <position position="552"/>
    </location>
    <ligand>
        <name>L-isoleucyl-5'-AMP</name>
        <dbReference type="ChEBI" id="CHEBI:178002"/>
    </ligand>
</feature>
<feature type="binding site" evidence="1">
    <location>
        <position position="596"/>
    </location>
    <ligand>
        <name>ATP</name>
        <dbReference type="ChEBI" id="CHEBI:30616"/>
    </ligand>
</feature>
<feature type="binding site" evidence="1">
    <location>
        <position position="886"/>
    </location>
    <ligand>
        <name>Zn(2+)</name>
        <dbReference type="ChEBI" id="CHEBI:29105"/>
    </ligand>
</feature>
<feature type="binding site" evidence="1">
    <location>
        <position position="889"/>
    </location>
    <ligand>
        <name>Zn(2+)</name>
        <dbReference type="ChEBI" id="CHEBI:29105"/>
    </ligand>
</feature>
<feature type="binding site" evidence="1">
    <location>
        <position position="906"/>
    </location>
    <ligand>
        <name>Zn(2+)</name>
        <dbReference type="ChEBI" id="CHEBI:29105"/>
    </ligand>
</feature>
<feature type="binding site" evidence="1">
    <location>
        <position position="909"/>
    </location>
    <ligand>
        <name>Zn(2+)</name>
        <dbReference type="ChEBI" id="CHEBI:29105"/>
    </ligand>
</feature>
<name>SYI_THENN</name>